<feature type="chain" id="PRO_1000121830" description="Large ribosomal subunit protein uL29">
    <location>
        <begin position="1"/>
        <end position="66"/>
    </location>
</feature>
<gene>
    <name evidence="1" type="primary">rpl29</name>
    <name type="ordered locus">TON_0073</name>
</gene>
<proteinExistence type="inferred from homology"/>
<sequence length="66" mass="7887">MKPSEIREMSIEEIDKKIRELRLELAKERAVLTMGASLENPMVIRNIRRDIARLLTIKKEKLREKR</sequence>
<evidence type="ECO:0000255" key="1">
    <source>
        <dbReference type="HAMAP-Rule" id="MF_00374"/>
    </source>
</evidence>
<evidence type="ECO:0000305" key="2"/>
<organism>
    <name type="scientific">Thermococcus onnurineus (strain NA1)</name>
    <dbReference type="NCBI Taxonomy" id="523850"/>
    <lineage>
        <taxon>Archaea</taxon>
        <taxon>Methanobacteriati</taxon>
        <taxon>Methanobacteriota</taxon>
        <taxon>Thermococci</taxon>
        <taxon>Thermococcales</taxon>
        <taxon>Thermococcaceae</taxon>
        <taxon>Thermococcus</taxon>
    </lineage>
</organism>
<comment type="similarity">
    <text evidence="1">Belongs to the universal ribosomal protein uL29 family.</text>
</comment>
<keyword id="KW-0687">Ribonucleoprotein</keyword>
<keyword id="KW-0689">Ribosomal protein</keyword>
<name>RL29_THEON</name>
<reference key="1">
    <citation type="journal article" date="2008" name="J. Bacteriol.">
        <title>The complete genome sequence of Thermococcus onnurineus NA1 reveals a mixed heterotrophic and carboxydotrophic metabolism.</title>
        <authorList>
            <person name="Lee H.S."/>
            <person name="Kang S.G."/>
            <person name="Bae S.S."/>
            <person name="Lim J.K."/>
            <person name="Cho Y."/>
            <person name="Kim Y.J."/>
            <person name="Jeon J.H."/>
            <person name="Cha S.-S."/>
            <person name="Kwon K.K."/>
            <person name="Kim H.-T."/>
            <person name="Park C.-J."/>
            <person name="Lee H.-W."/>
            <person name="Kim S.I."/>
            <person name="Chun J."/>
            <person name="Colwell R.R."/>
            <person name="Kim S.-J."/>
            <person name="Lee J.-H."/>
        </authorList>
    </citation>
    <scope>NUCLEOTIDE SEQUENCE [LARGE SCALE GENOMIC DNA]</scope>
    <source>
        <strain>NA1</strain>
    </source>
</reference>
<dbReference type="EMBL" id="CP000855">
    <property type="protein sequence ID" value="ACJ15557.1"/>
    <property type="molecule type" value="Genomic_DNA"/>
</dbReference>
<dbReference type="RefSeq" id="WP_012571030.1">
    <property type="nucleotide sequence ID" value="NC_011529.1"/>
</dbReference>
<dbReference type="SMR" id="B6YSM0"/>
<dbReference type="STRING" id="523850.TON_0073"/>
<dbReference type="GeneID" id="7017719"/>
<dbReference type="KEGG" id="ton:TON_0073"/>
<dbReference type="PATRIC" id="fig|523850.10.peg.73"/>
<dbReference type="eggNOG" id="arCOG00785">
    <property type="taxonomic scope" value="Archaea"/>
</dbReference>
<dbReference type="HOGENOM" id="CLU_158491_2_2_2"/>
<dbReference type="OrthoDB" id="11736at2157"/>
<dbReference type="Proteomes" id="UP000002727">
    <property type="component" value="Chromosome"/>
</dbReference>
<dbReference type="GO" id="GO:1990904">
    <property type="term" value="C:ribonucleoprotein complex"/>
    <property type="evidence" value="ECO:0007669"/>
    <property type="project" value="UniProtKB-KW"/>
</dbReference>
<dbReference type="GO" id="GO:0005840">
    <property type="term" value="C:ribosome"/>
    <property type="evidence" value="ECO:0007669"/>
    <property type="project" value="UniProtKB-KW"/>
</dbReference>
<dbReference type="GO" id="GO:0003735">
    <property type="term" value="F:structural constituent of ribosome"/>
    <property type="evidence" value="ECO:0007669"/>
    <property type="project" value="InterPro"/>
</dbReference>
<dbReference type="GO" id="GO:0006412">
    <property type="term" value="P:translation"/>
    <property type="evidence" value="ECO:0007669"/>
    <property type="project" value="UniProtKB-UniRule"/>
</dbReference>
<dbReference type="CDD" id="cd00427">
    <property type="entry name" value="Ribosomal_L29_HIP"/>
    <property type="match status" value="1"/>
</dbReference>
<dbReference type="Gene3D" id="1.10.287.310">
    <property type="match status" value="1"/>
</dbReference>
<dbReference type="HAMAP" id="MF_00374">
    <property type="entry name" value="Ribosomal_uL29"/>
    <property type="match status" value="1"/>
</dbReference>
<dbReference type="InterPro" id="IPR001854">
    <property type="entry name" value="Ribosomal_uL29"/>
</dbReference>
<dbReference type="InterPro" id="IPR018254">
    <property type="entry name" value="Ribosomal_uL29_CS"/>
</dbReference>
<dbReference type="InterPro" id="IPR036049">
    <property type="entry name" value="Ribosomal_uL29_sf"/>
</dbReference>
<dbReference type="NCBIfam" id="TIGR00012">
    <property type="entry name" value="L29"/>
    <property type="match status" value="1"/>
</dbReference>
<dbReference type="Pfam" id="PF00831">
    <property type="entry name" value="Ribosomal_L29"/>
    <property type="match status" value="1"/>
</dbReference>
<dbReference type="SUPFAM" id="SSF46561">
    <property type="entry name" value="Ribosomal protein L29 (L29p)"/>
    <property type="match status" value="1"/>
</dbReference>
<dbReference type="PROSITE" id="PS00579">
    <property type="entry name" value="RIBOSOMAL_L29"/>
    <property type="match status" value="1"/>
</dbReference>
<protein>
    <recommendedName>
        <fullName evidence="1">Large ribosomal subunit protein uL29</fullName>
    </recommendedName>
    <alternativeName>
        <fullName evidence="2">50S ribosomal protein L29</fullName>
    </alternativeName>
</protein>
<accession>B6YSM0</accession>